<sequence length="232" mass="26511">MGIGKSKMDPCHLSVPWGKSQSVDTSQSHHMSDSKQSEEISLHGDAVCSSTAEMPAEEQEGVEERPEEDTEEEVFLKFVILHAEEDTGEALRVQSLLENDFGIKPGIIFAEMPCGRQHLQNLDDAVNGSAWTILLLTENFLRDTWCKFQFYSSLMNSVNRQHKYNSVIPMRPLNNPLPRERTPFALRTINALEEESRGFPTQVERIFQESVYRIQQAIWKETRNTVQRQSVA</sequence>
<proteinExistence type="evidence at transcript level"/>
<organism>
    <name type="scientific">Bos taurus</name>
    <name type="common">Bovine</name>
    <dbReference type="NCBI Taxonomy" id="9913"/>
    <lineage>
        <taxon>Eukaryota</taxon>
        <taxon>Metazoa</taxon>
        <taxon>Chordata</taxon>
        <taxon>Craniata</taxon>
        <taxon>Vertebrata</taxon>
        <taxon>Euteleostomi</taxon>
        <taxon>Mammalia</taxon>
        <taxon>Eutheria</taxon>
        <taxon>Laurasiatheria</taxon>
        <taxon>Artiodactyla</taxon>
        <taxon>Ruminantia</taxon>
        <taxon>Pecora</taxon>
        <taxon>Bovidae</taxon>
        <taxon>Bovinae</taxon>
        <taxon>Bos</taxon>
    </lineage>
</organism>
<accession>Q2LGB7</accession>
<feature type="initiator methionine" description="Removed" evidence="2">
    <location>
        <position position="1"/>
    </location>
</feature>
<feature type="chain" id="PRO_0000317688" description="TIR domain-containing adapter molecule 2">
    <location>
        <begin position="2"/>
        <end position="232"/>
    </location>
</feature>
<feature type="domain" description="TIR" evidence="3">
    <location>
        <begin position="70"/>
        <end position="226"/>
    </location>
</feature>
<feature type="region of interest" description="Disordered" evidence="4">
    <location>
        <begin position="1"/>
        <end position="71"/>
    </location>
</feature>
<feature type="compositionally biased region" description="Basic and acidic residues" evidence="4">
    <location>
        <begin position="1"/>
        <end position="10"/>
    </location>
</feature>
<feature type="compositionally biased region" description="Polar residues" evidence="4">
    <location>
        <begin position="19"/>
        <end position="29"/>
    </location>
</feature>
<feature type="compositionally biased region" description="Basic and acidic residues" evidence="4">
    <location>
        <begin position="30"/>
        <end position="42"/>
    </location>
</feature>
<feature type="compositionally biased region" description="Acidic residues" evidence="4">
    <location>
        <begin position="55"/>
        <end position="71"/>
    </location>
</feature>
<feature type="modified residue" description="Phosphotyrosine" evidence="2">
    <location>
        <position position="164"/>
    </location>
</feature>
<feature type="lipid moiety-binding region" description="N-myristoyl glycine" evidence="2">
    <location>
        <position position="2"/>
    </location>
</feature>
<keyword id="KW-1003">Cell membrane</keyword>
<keyword id="KW-0966">Cell projection</keyword>
<keyword id="KW-0963">Cytoplasm</keyword>
<keyword id="KW-0256">Endoplasmic reticulum</keyword>
<keyword id="KW-0967">Endosome</keyword>
<keyword id="KW-0333">Golgi apparatus</keyword>
<keyword id="KW-0391">Immunity</keyword>
<keyword id="KW-0395">Inflammatory response</keyword>
<keyword id="KW-0399">Innate immunity</keyword>
<keyword id="KW-0449">Lipoprotein</keyword>
<keyword id="KW-0472">Membrane</keyword>
<keyword id="KW-0519">Myristate</keyword>
<keyword id="KW-0597">Phosphoprotein</keyword>
<keyword id="KW-1185">Reference proteome</keyword>
<gene>
    <name type="primary">TICAM2</name>
    <name type="synonym">TRAM</name>
</gene>
<comment type="function">
    <text evidence="2">Functions as a sorting adapter in different signaling pathways to facilitate downstream signaling leading to type I interferon induction. In TLR4 signaling, physically bridges TLR4 and TICAM1 and functionally transmits signal to TICAM1 in early endosomes after endocytosis of TLR4. In TLR2 signaling, physically bridges TLR2 and MYD88 and is required for the TLR2-dependent movement of MYD88 to endosomes following ligand engagement. Involved in IL-18 signaling and is proposed to function as a sorting adapter for MYD88 in IL-18 signaling during adaptive immune response. Forms a complex with RAB11FIP2 that is recruited to the phagosomes to promote the activation of the actin-regulatory GTPases RAC1 and CDC42 and subsequent phagocytosis of Gram-negative bacteria.</text>
</comment>
<comment type="subunit">
    <text evidence="2">Homodimer. Interacts with TLR4, TICAM1, IRF3 and IRF7 in response to LPS. Interacts with IL1R1, IL1RAP, IRAK2, IRAK3 and TRAF6. Interacts with protein kinase-inactive mutants of IRAK1 and IRAK4. Isoform 1 interacts with isoform 2; the interaction occurs in late endosomes and disrupts the interaction between isoform 1 and TICAM1. Interacts with MYD88; the interaction decreases after IL-18 stimulation in a time-dependent manner. Interacts with IL18R1 and IL18RAP. Interacts with TLR2. Interacts with RAB11FIP2.</text>
</comment>
<comment type="subcellular location">
    <subcellularLocation>
        <location evidence="1">Cytoplasm</location>
    </subcellularLocation>
    <subcellularLocation>
        <location evidence="1">Golgi apparatus</location>
    </subcellularLocation>
    <subcellularLocation>
        <location evidence="1">Cell membrane</location>
    </subcellularLocation>
    <subcellularLocation>
        <location evidence="1">Endoplasmic reticulum</location>
    </subcellularLocation>
    <subcellularLocation>
        <location evidence="1">Early endosome</location>
    </subcellularLocation>
    <subcellularLocation>
        <location evidence="1">Late endosome</location>
    </subcellularLocation>
    <subcellularLocation>
        <location evidence="2">Cell projection</location>
        <location evidence="2">Phagocytic cup</location>
    </subcellularLocation>
    <text evidence="1">Localized to the plasma membrane as a result of myristoylation.</text>
</comment>
<comment type="domain">
    <text evidence="2">The TIR domain mediates the interaction with TRAF6 and MYD88.</text>
</comment>
<comment type="PTM">
    <text evidence="2">Myristoylated. Required for membrane association which is critical for its ability to initiate efficient signaling.</text>
</comment>
<comment type="PTM">
    <text evidence="2">Phosphorylated by PRKCE in response to LPS. Phosphorylation is essential for its function. It is depleted from the membrane upon phosphorylation. Tyrosine phosphorylation is inhibited by phosphatase PTPN4.</text>
</comment>
<dbReference type="EMBL" id="DQ319071">
    <property type="protein sequence ID" value="ABC47874.1"/>
    <property type="molecule type" value="mRNA"/>
</dbReference>
<dbReference type="EMBL" id="BC118338">
    <property type="protein sequence ID" value="AAI18339.1"/>
    <property type="molecule type" value="mRNA"/>
</dbReference>
<dbReference type="RefSeq" id="NP_001039921.1">
    <property type="nucleotide sequence ID" value="NM_001046456.1"/>
</dbReference>
<dbReference type="RefSeq" id="XP_005211269.1">
    <property type="nucleotide sequence ID" value="XM_005211212.5"/>
</dbReference>
<dbReference type="RefSeq" id="XP_010807135.1">
    <property type="nucleotide sequence ID" value="XM_010808833.2"/>
</dbReference>
<dbReference type="SMR" id="Q2LGB7"/>
<dbReference type="FunCoup" id="Q2LGB7">
    <property type="interactions" value="175"/>
</dbReference>
<dbReference type="STRING" id="9913.ENSBTAP00000003042"/>
<dbReference type="PaxDb" id="9913-ENSBTAP00000003042"/>
<dbReference type="Ensembl" id="ENSBTAT00000003042.7">
    <property type="protein sequence ID" value="ENSBTAP00000003042.5"/>
    <property type="gene ID" value="ENSBTAG00000002357.7"/>
</dbReference>
<dbReference type="Ensembl" id="ENSBTAT00000088813.1">
    <property type="protein sequence ID" value="ENSBTAP00000090415.1"/>
    <property type="gene ID" value="ENSBTAG00000002357.7"/>
</dbReference>
<dbReference type="Ensembl" id="ENSBTAT00000122213.1">
    <property type="protein sequence ID" value="ENSBTAP00000091799.1"/>
    <property type="gene ID" value="ENSBTAG00000002357.7"/>
</dbReference>
<dbReference type="Ensembl" id="ENSBTAT00000133997.1">
    <property type="protein sequence ID" value="ENSBTAP00000093874.1"/>
    <property type="gene ID" value="ENSBTAG00000002357.7"/>
</dbReference>
<dbReference type="Ensembl" id="ENSBTAT00000135835.1">
    <property type="protein sequence ID" value="ENSBTAP00000091121.1"/>
    <property type="gene ID" value="ENSBTAG00000002357.7"/>
</dbReference>
<dbReference type="GeneID" id="539350"/>
<dbReference type="KEGG" id="bta:539350"/>
<dbReference type="CTD" id="353376"/>
<dbReference type="VEuPathDB" id="HostDB:ENSBTAG00000002357"/>
<dbReference type="VGNC" id="VGNC:55148">
    <property type="gene designation" value="TICAM2"/>
</dbReference>
<dbReference type="eggNOG" id="KOG1693">
    <property type="taxonomic scope" value="Eukaryota"/>
</dbReference>
<dbReference type="GeneTree" id="ENSGT00940000164712"/>
<dbReference type="HOGENOM" id="CLU_094608_0_0_1"/>
<dbReference type="InParanoid" id="Q2LGB7"/>
<dbReference type="OMA" id="YCIKPGI"/>
<dbReference type="OrthoDB" id="62956at2759"/>
<dbReference type="TreeFam" id="TF336953"/>
<dbReference type="Reactome" id="R-BTA-140534">
    <property type="pathway name" value="Caspase activation via Death Receptors in the presence of ligand"/>
</dbReference>
<dbReference type="Reactome" id="R-BTA-166016">
    <property type="pathway name" value="Toll Like Receptor 4 (TLR4) Cascade"/>
</dbReference>
<dbReference type="Reactome" id="R-BTA-166166">
    <property type="pathway name" value="MyD88-independent TLR4 cascade"/>
</dbReference>
<dbReference type="Reactome" id="R-BTA-2562578">
    <property type="pathway name" value="TRIF-mediated programmed cell death"/>
</dbReference>
<dbReference type="Reactome" id="R-BTA-6798695">
    <property type="pathway name" value="Neutrophil degranulation"/>
</dbReference>
<dbReference type="Reactome" id="R-BTA-936964">
    <property type="pathway name" value="Activation of IRF3, IRF7 mediated by TBK1, IKKEpsilon (IKBKE)"/>
</dbReference>
<dbReference type="Reactome" id="R-BTA-937041">
    <property type="pathway name" value="IKK complex recruitment mediated by RIP1"/>
</dbReference>
<dbReference type="Reactome" id="R-BTA-937072">
    <property type="pathway name" value="TRAF6-mediated induction of TAK1 complex within TLR4 complex"/>
</dbReference>
<dbReference type="Reactome" id="R-BTA-975163">
    <property type="pathway name" value="IRAK2 mediated activation of TAK1 complex upon TLR7/8 or 9 stimulation"/>
</dbReference>
<dbReference type="Reactome" id="R-BTA-9824878">
    <property type="pathway name" value="Regulation of TBK1, IKKEpsilon (IKBKE)-mediated activation of IRF3, IRF7"/>
</dbReference>
<dbReference type="Proteomes" id="UP000009136">
    <property type="component" value="Chromosome 10"/>
</dbReference>
<dbReference type="Bgee" id="ENSBTAG00000002357">
    <property type="expression patterns" value="Expressed in prostate gland and 102 other cell types or tissues"/>
</dbReference>
<dbReference type="GO" id="GO:0042995">
    <property type="term" value="C:cell projection"/>
    <property type="evidence" value="ECO:0007669"/>
    <property type="project" value="UniProtKB-KW"/>
</dbReference>
<dbReference type="GO" id="GO:0005769">
    <property type="term" value="C:early endosome"/>
    <property type="evidence" value="ECO:0000250"/>
    <property type="project" value="UniProtKB"/>
</dbReference>
<dbReference type="GO" id="GO:0005783">
    <property type="term" value="C:endoplasmic reticulum"/>
    <property type="evidence" value="ECO:0000250"/>
    <property type="project" value="UniProtKB"/>
</dbReference>
<dbReference type="GO" id="GO:0005768">
    <property type="term" value="C:endosome"/>
    <property type="evidence" value="ECO:0000318"/>
    <property type="project" value="GO_Central"/>
</dbReference>
<dbReference type="GO" id="GO:0005794">
    <property type="term" value="C:Golgi apparatus"/>
    <property type="evidence" value="ECO:0007669"/>
    <property type="project" value="UniProtKB-SubCell"/>
</dbReference>
<dbReference type="GO" id="GO:0005770">
    <property type="term" value="C:late endosome"/>
    <property type="evidence" value="ECO:0000250"/>
    <property type="project" value="UniProtKB"/>
</dbReference>
<dbReference type="GO" id="GO:0001891">
    <property type="term" value="C:phagocytic cup"/>
    <property type="evidence" value="ECO:0007669"/>
    <property type="project" value="UniProtKB-SubCell"/>
</dbReference>
<dbReference type="GO" id="GO:0005886">
    <property type="term" value="C:plasma membrane"/>
    <property type="evidence" value="ECO:0000250"/>
    <property type="project" value="UniProtKB"/>
</dbReference>
<dbReference type="GO" id="GO:0005543">
    <property type="term" value="F:phospholipid binding"/>
    <property type="evidence" value="ECO:0007669"/>
    <property type="project" value="Ensembl"/>
</dbReference>
<dbReference type="GO" id="GO:0035591">
    <property type="term" value="F:signaling adaptor activity"/>
    <property type="evidence" value="ECO:0000318"/>
    <property type="project" value="GO_Central"/>
</dbReference>
<dbReference type="GO" id="GO:0071222">
    <property type="term" value="P:cellular response to lipopolysaccharide"/>
    <property type="evidence" value="ECO:0000250"/>
    <property type="project" value="UniProtKB"/>
</dbReference>
<dbReference type="GO" id="GO:0051607">
    <property type="term" value="P:defense response to virus"/>
    <property type="evidence" value="ECO:0007669"/>
    <property type="project" value="Ensembl"/>
</dbReference>
<dbReference type="GO" id="GO:0006954">
    <property type="term" value="P:inflammatory response"/>
    <property type="evidence" value="ECO:0007669"/>
    <property type="project" value="UniProtKB-KW"/>
</dbReference>
<dbReference type="GO" id="GO:0045087">
    <property type="term" value="P:innate immune response"/>
    <property type="evidence" value="ECO:0007669"/>
    <property type="project" value="UniProtKB-KW"/>
</dbReference>
<dbReference type="GO" id="GO:0006909">
    <property type="term" value="P:phagocytosis"/>
    <property type="evidence" value="ECO:0007669"/>
    <property type="project" value="Ensembl"/>
</dbReference>
<dbReference type="GO" id="GO:0043123">
    <property type="term" value="P:positive regulation of canonical NF-kappaB signal transduction"/>
    <property type="evidence" value="ECO:0000318"/>
    <property type="project" value="GO_Central"/>
</dbReference>
<dbReference type="GO" id="GO:0071651">
    <property type="term" value="P:positive regulation of chemokine (C-C motif) ligand 5 production"/>
    <property type="evidence" value="ECO:0000250"/>
    <property type="project" value="UniProtKB"/>
</dbReference>
<dbReference type="GO" id="GO:2000494">
    <property type="term" value="P:positive regulation of interleukin-18-mediated signaling pathway"/>
    <property type="evidence" value="ECO:0007669"/>
    <property type="project" value="Ensembl"/>
</dbReference>
<dbReference type="GO" id="GO:0032755">
    <property type="term" value="P:positive regulation of interleukin-6 production"/>
    <property type="evidence" value="ECO:0007669"/>
    <property type="project" value="Ensembl"/>
</dbReference>
<dbReference type="GO" id="GO:0034145">
    <property type="term" value="P:positive regulation of toll-like receptor 4 signaling pathway"/>
    <property type="evidence" value="ECO:0000250"/>
    <property type="project" value="UniProtKB"/>
</dbReference>
<dbReference type="GO" id="GO:0032481">
    <property type="term" value="P:positive regulation of type I interferon production"/>
    <property type="evidence" value="ECO:0000318"/>
    <property type="project" value="GO_Central"/>
</dbReference>
<dbReference type="GO" id="GO:0032729">
    <property type="term" value="P:positive regulation of type II interferon production"/>
    <property type="evidence" value="ECO:0007669"/>
    <property type="project" value="Ensembl"/>
</dbReference>
<dbReference type="GO" id="GO:0070671">
    <property type="term" value="P:response to interleukin-12"/>
    <property type="evidence" value="ECO:0007669"/>
    <property type="project" value="Ensembl"/>
</dbReference>
<dbReference type="GO" id="GO:0035669">
    <property type="term" value="P:TRAM-dependent toll-like receptor 4 signaling pathway"/>
    <property type="evidence" value="ECO:0000250"/>
    <property type="project" value="UniProtKB"/>
</dbReference>
<dbReference type="GO" id="GO:0035666">
    <property type="term" value="P:TRIF-dependent toll-like receptor signaling pathway"/>
    <property type="evidence" value="ECO:0000318"/>
    <property type="project" value="GO_Central"/>
</dbReference>
<dbReference type="FunFam" id="3.40.50.10140:FF:000014">
    <property type="entry name" value="TIR domain-containing adapter molecule 2"/>
    <property type="match status" value="1"/>
</dbReference>
<dbReference type="Gene3D" id="3.40.50.10140">
    <property type="entry name" value="Toll/interleukin-1 receptor homology (TIR) domain"/>
    <property type="match status" value="1"/>
</dbReference>
<dbReference type="InterPro" id="IPR046946">
    <property type="entry name" value="TCAM1/2"/>
</dbReference>
<dbReference type="InterPro" id="IPR000157">
    <property type="entry name" value="TIR_dom"/>
</dbReference>
<dbReference type="InterPro" id="IPR035897">
    <property type="entry name" value="Toll_tir_struct_dom_sf"/>
</dbReference>
<dbReference type="PANTHER" id="PTHR47230">
    <property type="entry name" value="TIR DOMAIN-CONTAINING ADAPTER MOLECULE 1"/>
    <property type="match status" value="1"/>
</dbReference>
<dbReference type="PANTHER" id="PTHR47230:SF2">
    <property type="entry name" value="TIR DOMAIN-CONTAINING ADAPTER MOLECULE 2"/>
    <property type="match status" value="1"/>
</dbReference>
<dbReference type="Pfam" id="PF13676">
    <property type="entry name" value="TIR_2"/>
    <property type="match status" value="1"/>
</dbReference>
<dbReference type="SUPFAM" id="SSF52200">
    <property type="entry name" value="Toll/Interleukin receptor TIR domain"/>
    <property type="match status" value="1"/>
</dbReference>
<dbReference type="PROSITE" id="PS50104">
    <property type="entry name" value="TIR"/>
    <property type="match status" value="1"/>
</dbReference>
<reference key="1">
    <citation type="journal article" date="2006" name="Vet. Immunol. Immunopathol.">
        <title>Cloning and radiation hybrid mapping of bovine toll-like receptor-4 (TLR-4) signaling molecules.</title>
        <authorList>
            <person name="Connor E.E."/>
            <person name="Cates E.A."/>
            <person name="Williams J.L."/>
            <person name="Bannerman D.D."/>
        </authorList>
    </citation>
    <scope>NUCLEOTIDE SEQUENCE [MRNA]</scope>
    <source>
        <tissue>Mammary gland</tissue>
    </source>
</reference>
<reference key="2">
    <citation type="submission" date="2006-06" db="EMBL/GenBank/DDBJ databases">
        <authorList>
            <consortium name="NIH - Mammalian Gene Collection (MGC) project"/>
        </authorList>
    </citation>
    <scope>NUCLEOTIDE SEQUENCE [LARGE SCALE MRNA]</scope>
    <source>
        <strain>Hereford</strain>
        <tissue>Thymus</tissue>
    </source>
</reference>
<name>TCAM2_BOVIN</name>
<protein>
    <recommendedName>
        <fullName>TIR domain-containing adapter molecule 2</fullName>
        <shortName>TICAM-2</shortName>
    </recommendedName>
    <alternativeName>
        <fullName>TRIF-related adapter molecule</fullName>
    </alternativeName>
</protein>
<evidence type="ECO:0000250" key="1"/>
<evidence type="ECO:0000250" key="2">
    <source>
        <dbReference type="UniProtKB" id="Q86XR7"/>
    </source>
</evidence>
<evidence type="ECO:0000255" key="3">
    <source>
        <dbReference type="PROSITE-ProRule" id="PRU00204"/>
    </source>
</evidence>
<evidence type="ECO:0000256" key="4">
    <source>
        <dbReference type="SAM" id="MobiDB-lite"/>
    </source>
</evidence>